<proteinExistence type="inferred from homology"/>
<reference key="1">
    <citation type="journal article" date="2006" name="J. Bacteriol.">
        <title>Complete genome sequence of Yersinia pestis strains Antiqua and Nepal516: evidence of gene reduction in an emerging pathogen.</title>
        <authorList>
            <person name="Chain P.S.G."/>
            <person name="Hu P."/>
            <person name="Malfatti S.A."/>
            <person name="Radnedge L."/>
            <person name="Larimer F."/>
            <person name="Vergez L.M."/>
            <person name="Worsham P."/>
            <person name="Chu M.C."/>
            <person name="Andersen G.L."/>
        </authorList>
    </citation>
    <scope>NUCLEOTIDE SEQUENCE [LARGE SCALE GENOMIC DNA]</scope>
    <source>
        <strain>Antiqua</strain>
    </source>
</reference>
<comment type="function">
    <text evidence="1">This protein is involved in the repair of mismatches in DNA. It is possible that it carries out the mismatch recognition step. This protein has a weak ATPase activity.</text>
</comment>
<comment type="similarity">
    <text evidence="1">Belongs to the DNA mismatch repair MutS family.</text>
</comment>
<name>MUTS_YERPA</name>
<gene>
    <name evidence="1" type="primary">mutS</name>
    <name type="ordered locus">YPA_2789</name>
</gene>
<sequence>MKNNDKLDSHTPMMQQYLRLKAQHPEILLFYRMGDFYELFYSDAKRASQLLDISLTKRGASAGEPIPMAGVPYHSIENYLAKLVQLGESAAICEQIGDPATSKGPVERKVVRIVTPGTISDEALLQERQDNLLAAIWQDAKGFGYATLDISSGRFRVAEPADLETMAAELQRTNPAELLYPENFEPMSLIEHRHGLRRRPLWEFELDTAKQQLNLQFGTRDLIGFGVEQAHLALRAAGCLLQYVKDTQRTSLPHIRGLTMERQQDGIIMDAATRRNLELTQNLSGGSENTLAAILDCSVTPMGSRMLKRWLHMPIRDIRVLTDRQQAIGGLQDIAAELQTPLRQVGDLERILARLALRTARPRDLARMRHAFQQLPEIHRLLQPIDVPHVQNLLSQVGQFDELQDLLERAIVETPPVLVRDGGVIASGYNAELDEWRALADGATDYLDRLEIREREKLGLDTLKVGFNGVHGYYIQVSRGQSHLVPIHYVRRQTLKNAERYIIPELKEYEDKVLTSKGKALAIEKGLYEEIFDLLLPHLPELQLSANALAELDVLANLAERAETLNYSCPTLSDKPGIKIMGGRHPVVEQVLKEPFISNPLTLSPQRRMLIITGPNMGGKSTYMRQTALIVLLAHLGSYVPADQATIGPIDRIFTRVGAADDLASGRSTFMVEMTETANILHNATEQSLVLMDEIGRGTSTYDGLSLAWACAENLASRIKAMTLFATHYFELTTLPEKMEGVVNVHLDALEHGETIAFMHSVQEGAASKSYGLAVAALAGVPRDVIKRARQKLKELESLSNNAAASTIDGSQMTLLNEEIPPAVEALEALEALDPDSLSPRQALEWIYRLKNMV</sequence>
<evidence type="ECO:0000255" key="1">
    <source>
        <dbReference type="HAMAP-Rule" id="MF_00096"/>
    </source>
</evidence>
<feature type="chain" id="PRO_1000008118" description="DNA mismatch repair protein MutS">
    <location>
        <begin position="1"/>
        <end position="854"/>
    </location>
</feature>
<feature type="binding site" evidence="1">
    <location>
        <begin position="614"/>
        <end position="621"/>
    </location>
    <ligand>
        <name>ATP</name>
        <dbReference type="ChEBI" id="CHEBI:30616"/>
    </ligand>
</feature>
<organism>
    <name type="scientific">Yersinia pestis bv. Antiqua (strain Antiqua)</name>
    <dbReference type="NCBI Taxonomy" id="360102"/>
    <lineage>
        <taxon>Bacteria</taxon>
        <taxon>Pseudomonadati</taxon>
        <taxon>Pseudomonadota</taxon>
        <taxon>Gammaproteobacteria</taxon>
        <taxon>Enterobacterales</taxon>
        <taxon>Yersiniaceae</taxon>
        <taxon>Yersinia</taxon>
    </lineage>
</organism>
<keyword id="KW-0067">ATP-binding</keyword>
<keyword id="KW-0227">DNA damage</keyword>
<keyword id="KW-0234">DNA repair</keyword>
<keyword id="KW-0238">DNA-binding</keyword>
<keyword id="KW-0547">Nucleotide-binding</keyword>
<accession>Q1C471</accession>
<protein>
    <recommendedName>
        <fullName evidence="1">DNA mismatch repair protein MutS</fullName>
    </recommendedName>
</protein>
<dbReference type="EMBL" id="CP000308">
    <property type="protein sequence ID" value="ABG14751.1"/>
    <property type="molecule type" value="Genomic_DNA"/>
</dbReference>
<dbReference type="RefSeq" id="WP_002264434.1">
    <property type="nucleotide sequence ID" value="NC_008150.1"/>
</dbReference>
<dbReference type="SMR" id="Q1C471"/>
<dbReference type="KEGG" id="ypa:YPA_2789"/>
<dbReference type="Proteomes" id="UP000001971">
    <property type="component" value="Chromosome"/>
</dbReference>
<dbReference type="GO" id="GO:0005829">
    <property type="term" value="C:cytosol"/>
    <property type="evidence" value="ECO:0007669"/>
    <property type="project" value="TreeGrafter"/>
</dbReference>
<dbReference type="GO" id="GO:0005524">
    <property type="term" value="F:ATP binding"/>
    <property type="evidence" value="ECO:0007669"/>
    <property type="project" value="UniProtKB-UniRule"/>
</dbReference>
<dbReference type="GO" id="GO:0140664">
    <property type="term" value="F:ATP-dependent DNA damage sensor activity"/>
    <property type="evidence" value="ECO:0007669"/>
    <property type="project" value="InterPro"/>
</dbReference>
<dbReference type="GO" id="GO:0003684">
    <property type="term" value="F:damaged DNA binding"/>
    <property type="evidence" value="ECO:0007669"/>
    <property type="project" value="UniProtKB-UniRule"/>
</dbReference>
<dbReference type="GO" id="GO:0030983">
    <property type="term" value="F:mismatched DNA binding"/>
    <property type="evidence" value="ECO:0007669"/>
    <property type="project" value="InterPro"/>
</dbReference>
<dbReference type="GO" id="GO:0006298">
    <property type="term" value="P:mismatch repair"/>
    <property type="evidence" value="ECO:0007669"/>
    <property type="project" value="UniProtKB-UniRule"/>
</dbReference>
<dbReference type="CDD" id="cd03284">
    <property type="entry name" value="ABC_MutS1"/>
    <property type="match status" value="1"/>
</dbReference>
<dbReference type="FunFam" id="1.10.1420.10:FF:000002">
    <property type="entry name" value="DNA mismatch repair protein MutS"/>
    <property type="match status" value="1"/>
</dbReference>
<dbReference type="FunFam" id="3.30.420.110:FF:000001">
    <property type="entry name" value="DNA mismatch repair protein MutS"/>
    <property type="match status" value="1"/>
</dbReference>
<dbReference type="FunFam" id="3.40.1170.10:FF:000001">
    <property type="entry name" value="DNA mismatch repair protein MutS"/>
    <property type="match status" value="1"/>
</dbReference>
<dbReference type="FunFam" id="3.40.50.300:FF:000283">
    <property type="entry name" value="DNA mismatch repair protein MutS"/>
    <property type="match status" value="1"/>
</dbReference>
<dbReference type="Gene3D" id="1.10.1420.10">
    <property type="match status" value="2"/>
</dbReference>
<dbReference type="Gene3D" id="6.10.140.430">
    <property type="match status" value="1"/>
</dbReference>
<dbReference type="Gene3D" id="3.40.1170.10">
    <property type="entry name" value="DNA repair protein MutS, domain I"/>
    <property type="match status" value="1"/>
</dbReference>
<dbReference type="Gene3D" id="3.30.420.110">
    <property type="entry name" value="MutS, connector domain"/>
    <property type="match status" value="1"/>
</dbReference>
<dbReference type="Gene3D" id="3.40.50.300">
    <property type="entry name" value="P-loop containing nucleotide triphosphate hydrolases"/>
    <property type="match status" value="1"/>
</dbReference>
<dbReference type="HAMAP" id="MF_00096">
    <property type="entry name" value="MutS"/>
    <property type="match status" value="1"/>
</dbReference>
<dbReference type="InterPro" id="IPR005748">
    <property type="entry name" value="DNA_mismatch_repair_MutS"/>
</dbReference>
<dbReference type="InterPro" id="IPR007695">
    <property type="entry name" value="DNA_mismatch_repair_MutS-lik_N"/>
</dbReference>
<dbReference type="InterPro" id="IPR017261">
    <property type="entry name" value="DNA_mismatch_repair_MutS/MSH"/>
</dbReference>
<dbReference type="InterPro" id="IPR000432">
    <property type="entry name" value="DNA_mismatch_repair_MutS_C"/>
</dbReference>
<dbReference type="InterPro" id="IPR007861">
    <property type="entry name" value="DNA_mismatch_repair_MutS_clamp"/>
</dbReference>
<dbReference type="InterPro" id="IPR007696">
    <property type="entry name" value="DNA_mismatch_repair_MutS_core"/>
</dbReference>
<dbReference type="InterPro" id="IPR016151">
    <property type="entry name" value="DNA_mismatch_repair_MutS_N"/>
</dbReference>
<dbReference type="InterPro" id="IPR036187">
    <property type="entry name" value="DNA_mismatch_repair_MutS_sf"/>
</dbReference>
<dbReference type="InterPro" id="IPR007860">
    <property type="entry name" value="DNA_mmatch_repair_MutS_con_dom"/>
</dbReference>
<dbReference type="InterPro" id="IPR045076">
    <property type="entry name" value="MutS"/>
</dbReference>
<dbReference type="InterPro" id="IPR036678">
    <property type="entry name" value="MutS_con_dom_sf"/>
</dbReference>
<dbReference type="InterPro" id="IPR027417">
    <property type="entry name" value="P-loop_NTPase"/>
</dbReference>
<dbReference type="NCBIfam" id="TIGR01070">
    <property type="entry name" value="mutS1"/>
    <property type="match status" value="1"/>
</dbReference>
<dbReference type="NCBIfam" id="NF003810">
    <property type="entry name" value="PRK05399.1"/>
    <property type="match status" value="1"/>
</dbReference>
<dbReference type="PANTHER" id="PTHR11361:SF34">
    <property type="entry name" value="DNA MISMATCH REPAIR PROTEIN MSH1, MITOCHONDRIAL"/>
    <property type="match status" value="1"/>
</dbReference>
<dbReference type="PANTHER" id="PTHR11361">
    <property type="entry name" value="DNA MISMATCH REPAIR PROTEIN MUTS FAMILY MEMBER"/>
    <property type="match status" value="1"/>
</dbReference>
<dbReference type="Pfam" id="PF01624">
    <property type="entry name" value="MutS_I"/>
    <property type="match status" value="1"/>
</dbReference>
<dbReference type="Pfam" id="PF05188">
    <property type="entry name" value="MutS_II"/>
    <property type="match status" value="1"/>
</dbReference>
<dbReference type="Pfam" id="PF05192">
    <property type="entry name" value="MutS_III"/>
    <property type="match status" value="1"/>
</dbReference>
<dbReference type="Pfam" id="PF05190">
    <property type="entry name" value="MutS_IV"/>
    <property type="match status" value="1"/>
</dbReference>
<dbReference type="Pfam" id="PF00488">
    <property type="entry name" value="MutS_V"/>
    <property type="match status" value="1"/>
</dbReference>
<dbReference type="PIRSF" id="PIRSF037677">
    <property type="entry name" value="DNA_mis_repair_Msh6"/>
    <property type="match status" value="1"/>
</dbReference>
<dbReference type="SMART" id="SM00534">
    <property type="entry name" value="MUTSac"/>
    <property type="match status" value="1"/>
</dbReference>
<dbReference type="SMART" id="SM00533">
    <property type="entry name" value="MUTSd"/>
    <property type="match status" value="1"/>
</dbReference>
<dbReference type="SUPFAM" id="SSF55271">
    <property type="entry name" value="DNA repair protein MutS, domain I"/>
    <property type="match status" value="1"/>
</dbReference>
<dbReference type="SUPFAM" id="SSF53150">
    <property type="entry name" value="DNA repair protein MutS, domain II"/>
    <property type="match status" value="1"/>
</dbReference>
<dbReference type="SUPFAM" id="SSF48334">
    <property type="entry name" value="DNA repair protein MutS, domain III"/>
    <property type="match status" value="1"/>
</dbReference>
<dbReference type="SUPFAM" id="SSF52540">
    <property type="entry name" value="P-loop containing nucleoside triphosphate hydrolases"/>
    <property type="match status" value="1"/>
</dbReference>
<dbReference type="PROSITE" id="PS00486">
    <property type="entry name" value="DNA_MISMATCH_REPAIR_2"/>
    <property type="match status" value="1"/>
</dbReference>